<keyword id="KW-0113">Calvin cycle</keyword>
<keyword id="KW-0120">Carbon dioxide fixation</keyword>
<feature type="chain" id="PRO_0000198632" description="Ribulose bisphosphate carboxylase small subunit">
    <location>
        <begin position="1"/>
        <end position="133"/>
    </location>
</feature>
<proteinExistence type="evidence at protein level"/>
<reference key="1">
    <citation type="journal article" date="1991" name="Mol. Gen. Genet.">
        <title>Identification and organization of carbon dioxide fixation genes in Xanthobacter flavus H4-14.</title>
        <authorList>
            <person name="Meijer W.G."/>
            <person name="Arnberg A.C."/>
            <person name="Enequist H.G."/>
            <person name="Terpstra P."/>
            <person name="Lidstrom M.E."/>
            <person name="Dijkhuizen L."/>
        </authorList>
    </citation>
    <scope>NUCLEOTIDE SEQUENCE [GENOMIC DNA]</scope>
    <source>
        <strain>H4-14</strain>
    </source>
</reference>
<reference key="2">
    <citation type="journal article" date="1999" name="Arch. Biochem. Biophys.">
        <title>Closely related form I ribulose bisphosphate carboxylase/oxygenase molecules that possess different CO2/O2 substrate specificities.</title>
        <authorList>
            <person name="Horken K.M."/>
            <person name="Tabita F.R."/>
        </authorList>
    </citation>
    <scope>FUNCTION</scope>
    <scope>CATALYTIC ACTIVITY</scope>
    <scope>BIOPHYSICOCHEMICAL PROPERTIES</scope>
    <source>
        <strain>H4-14</strain>
    </source>
</reference>
<gene>
    <name evidence="1" type="primary">cbbS</name>
    <name type="synonym">cfxS</name>
</gene>
<protein>
    <recommendedName>
        <fullName evidence="1">Ribulose bisphosphate carboxylase small subunit</fullName>
        <shortName evidence="1">RuBisCO small subunit</shortName>
    </recommendedName>
</protein>
<comment type="function">
    <text evidence="1 2">RuBisCO catalyzes two reactions: the carboxylation of D-ribulose 1,5-bisphosphate, the primary event in carbon dioxide fixation, as well as the oxidative fragmentation of the pentose substrate. Both reactions occur simultaneously and in competition at the same active site. Although the small subunit is not catalytic it is essential for maximal activity.</text>
</comment>
<comment type="biophysicochemical properties">
    <kinetics>
        <KM evidence="2">23 uM for ribulose 1,5-bisphosphate</KM>
        <KM evidence="2">100 uM for CO(2)</KM>
        <Vmax evidence="2">1.8 umol/min/mg enzyme with CO(2) as substrate</Vmax>
        <text>The CO(2)/O(2) specificity factor (tau) is 44.</text>
    </kinetics>
</comment>
<comment type="subunit">
    <text evidence="1 3">Heterohexadecamer of 8 large and 8 small subunits.</text>
</comment>
<comment type="miscellaneous">
    <text evidence="1">The basic functional RuBisCO is composed of a large chain homodimer in a 'head-to-tail' conformation. In form I RuBisCO this homodimer is arranged in a barrel-like tetramer with the small subunits forming a tetrameric 'cap' on each end of the 'barrel'.</text>
</comment>
<comment type="similarity">
    <text evidence="1">Belongs to the RuBisCO small chain family.</text>
</comment>
<evidence type="ECO:0000255" key="1">
    <source>
        <dbReference type="HAMAP-Rule" id="MF_00859"/>
    </source>
</evidence>
<evidence type="ECO:0000269" key="2">
    <source>
    </source>
</evidence>
<evidence type="ECO:0000305" key="3">
    <source>
    </source>
</evidence>
<sequence length="133" mass="15318">MRITQGTFSFLPDLTAAQVKAQIQYALDQNWAVSVEYTDDPHPRNTYWEMWGLPMFDLRDAAGVYGEVEACRTAHPGKYVRVNAFDSNRGWETVRLSFIVQRPEKEDGFRLDRTEGPGRTQRYALQHRSYAAG</sequence>
<dbReference type="EMBL" id="X17252">
    <property type="protein sequence ID" value="CAA35116.1"/>
    <property type="molecule type" value="Genomic_DNA"/>
</dbReference>
<dbReference type="PIR" id="S13574">
    <property type="entry name" value="RKQXSX"/>
</dbReference>
<dbReference type="SMR" id="P23012"/>
<dbReference type="SABIO-RK" id="P23012"/>
<dbReference type="GO" id="GO:0016984">
    <property type="term" value="F:ribulose-bisphosphate carboxylase activity"/>
    <property type="evidence" value="ECO:0007669"/>
    <property type="project" value="UniProtKB-UniRule"/>
</dbReference>
<dbReference type="GO" id="GO:0019253">
    <property type="term" value="P:reductive pentose-phosphate cycle"/>
    <property type="evidence" value="ECO:0007669"/>
    <property type="project" value="UniProtKB-UniRule"/>
</dbReference>
<dbReference type="CDD" id="cd03527">
    <property type="entry name" value="RuBisCO_small"/>
    <property type="match status" value="1"/>
</dbReference>
<dbReference type="Gene3D" id="3.30.190.10">
    <property type="entry name" value="Ribulose bisphosphate carboxylase, small subunit"/>
    <property type="match status" value="1"/>
</dbReference>
<dbReference type="HAMAP" id="MF_00859">
    <property type="entry name" value="RuBisCO_S_bact"/>
    <property type="match status" value="1"/>
</dbReference>
<dbReference type="InterPro" id="IPR024681">
    <property type="entry name" value="RuBisCO_ssu"/>
</dbReference>
<dbReference type="InterPro" id="IPR000894">
    <property type="entry name" value="RuBisCO_ssu_dom"/>
</dbReference>
<dbReference type="InterPro" id="IPR036385">
    <property type="entry name" value="RuBisCO_ssu_sf"/>
</dbReference>
<dbReference type="PANTHER" id="PTHR31262">
    <property type="entry name" value="RIBULOSE BISPHOSPHATE CARBOXYLASE SMALL CHAIN 1, CHLOROPLASTIC"/>
    <property type="match status" value="1"/>
</dbReference>
<dbReference type="PANTHER" id="PTHR31262:SF23">
    <property type="entry name" value="RIBULOSE BISPHOSPHATE CARBOXYLASE SMALL SUBUNIT"/>
    <property type="match status" value="1"/>
</dbReference>
<dbReference type="Pfam" id="PF00101">
    <property type="entry name" value="RuBisCO_small"/>
    <property type="match status" value="1"/>
</dbReference>
<dbReference type="SMART" id="SM00961">
    <property type="entry name" value="RuBisCO_small"/>
    <property type="match status" value="1"/>
</dbReference>
<dbReference type="SUPFAM" id="SSF55239">
    <property type="entry name" value="RuBisCO, small subunit"/>
    <property type="match status" value="1"/>
</dbReference>
<accession>P23012</accession>
<organism>
    <name type="scientific">Xanthobacter flavus</name>
    <dbReference type="NCBI Taxonomy" id="281"/>
    <lineage>
        <taxon>Bacteria</taxon>
        <taxon>Pseudomonadati</taxon>
        <taxon>Pseudomonadota</taxon>
        <taxon>Alphaproteobacteria</taxon>
        <taxon>Hyphomicrobiales</taxon>
        <taxon>Xanthobacteraceae</taxon>
        <taxon>Xanthobacter</taxon>
    </lineage>
</organism>
<name>RBS_XANFL</name>